<comment type="function">
    <text evidence="1">Binds directly to 23S ribosomal RNA and is necessary for the in vitro assembly process of the 50S ribosomal subunit. It is not involved in the protein synthesizing functions of that subunit.</text>
</comment>
<comment type="subcellular location">
    <subcellularLocation>
        <location>Plastid</location>
        <location>Chloroplast</location>
    </subcellularLocation>
</comment>
<comment type="similarity">
    <text evidence="1">Belongs to the bacterial ribosomal protein bL20 family.</text>
</comment>
<keyword id="KW-0150">Chloroplast</keyword>
<keyword id="KW-0934">Plastid</keyword>
<keyword id="KW-0687">Ribonucleoprotein</keyword>
<keyword id="KW-0689">Ribosomal protein</keyword>
<keyword id="KW-0694">RNA-binding</keyword>
<keyword id="KW-0699">rRNA-binding</keyword>
<gene>
    <name evidence="1" type="primary">rpl20</name>
</gene>
<name>RK20_CRUWA</name>
<geneLocation type="chloroplast"/>
<evidence type="ECO:0000255" key="1">
    <source>
        <dbReference type="HAMAP-Rule" id="MF_00382"/>
    </source>
</evidence>
<evidence type="ECO:0000305" key="2"/>
<feature type="chain" id="PRO_0000355496" description="Large ribosomal subunit protein bL20c">
    <location>
        <begin position="1"/>
        <end position="117"/>
    </location>
</feature>
<accession>A4QKV4</accession>
<dbReference type="EMBL" id="AP009372">
    <property type="protein sequence ID" value="BAF50309.1"/>
    <property type="molecule type" value="Genomic_DNA"/>
</dbReference>
<dbReference type="RefSeq" id="YP_001123485.1">
    <property type="nucleotide sequence ID" value="NC_009271.1"/>
</dbReference>
<dbReference type="SMR" id="A4QKV4"/>
<dbReference type="GeneID" id="4962751"/>
<dbReference type="GO" id="GO:0009507">
    <property type="term" value="C:chloroplast"/>
    <property type="evidence" value="ECO:0007669"/>
    <property type="project" value="UniProtKB-SubCell"/>
</dbReference>
<dbReference type="GO" id="GO:1990904">
    <property type="term" value="C:ribonucleoprotein complex"/>
    <property type="evidence" value="ECO:0007669"/>
    <property type="project" value="UniProtKB-KW"/>
</dbReference>
<dbReference type="GO" id="GO:0005840">
    <property type="term" value="C:ribosome"/>
    <property type="evidence" value="ECO:0007669"/>
    <property type="project" value="UniProtKB-KW"/>
</dbReference>
<dbReference type="GO" id="GO:0019843">
    <property type="term" value="F:rRNA binding"/>
    <property type="evidence" value="ECO:0007669"/>
    <property type="project" value="UniProtKB-UniRule"/>
</dbReference>
<dbReference type="GO" id="GO:0003735">
    <property type="term" value="F:structural constituent of ribosome"/>
    <property type="evidence" value="ECO:0007669"/>
    <property type="project" value="InterPro"/>
</dbReference>
<dbReference type="GO" id="GO:0000027">
    <property type="term" value="P:ribosomal large subunit assembly"/>
    <property type="evidence" value="ECO:0007669"/>
    <property type="project" value="UniProtKB-UniRule"/>
</dbReference>
<dbReference type="GO" id="GO:0006412">
    <property type="term" value="P:translation"/>
    <property type="evidence" value="ECO:0007669"/>
    <property type="project" value="InterPro"/>
</dbReference>
<dbReference type="CDD" id="cd07026">
    <property type="entry name" value="Ribosomal_L20"/>
    <property type="match status" value="1"/>
</dbReference>
<dbReference type="FunFam" id="1.10.1900.20:FF:000001">
    <property type="entry name" value="50S ribosomal protein L20"/>
    <property type="match status" value="1"/>
</dbReference>
<dbReference type="Gene3D" id="6.10.160.10">
    <property type="match status" value="1"/>
</dbReference>
<dbReference type="Gene3D" id="1.10.1900.20">
    <property type="entry name" value="Ribosomal protein L20"/>
    <property type="match status" value="1"/>
</dbReference>
<dbReference type="HAMAP" id="MF_00382">
    <property type="entry name" value="Ribosomal_bL20"/>
    <property type="match status" value="1"/>
</dbReference>
<dbReference type="InterPro" id="IPR005813">
    <property type="entry name" value="Ribosomal_bL20"/>
</dbReference>
<dbReference type="InterPro" id="IPR049946">
    <property type="entry name" value="RIBOSOMAL_L20_CS"/>
</dbReference>
<dbReference type="InterPro" id="IPR035566">
    <property type="entry name" value="Ribosomal_protein_bL20_C"/>
</dbReference>
<dbReference type="NCBIfam" id="TIGR01032">
    <property type="entry name" value="rplT_bact"/>
    <property type="match status" value="1"/>
</dbReference>
<dbReference type="PANTHER" id="PTHR10986">
    <property type="entry name" value="39S RIBOSOMAL PROTEIN L20"/>
    <property type="match status" value="1"/>
</dbReference>
<dbReference type="Pfam" id="PF00453">
    <property type="entry name" value="Ribosomal_L20"/>
    <property type="match status" value="1"/>
</dbReference>
<dbReference type="PRINTS" id="PR00062">
    <property type="entry name" value="RIBOSOMALL20"/>
</dbReference>
<dbReference type="SUPFAM" id="SSF74731">
    <property type="entry name" value="Ribosomal protein L20"/>
    <property type="match status" value="1"/>
</dbReference>
<dbReference type="PROSITE" id="PS00937">
    <property type="entry name" value="RIBOSOMAL_L20"/>
    <property type="match status" value="1"/>
</dbReference>
<reference key="1">
    <citation type="submission" date="2007-03" db="EMBL/GenBank/DDBJ databases">
        <title>Sequencing analysis of Crucihimalaya wallichii chloroplast DNA.</title>
        <authorList>
            <person name="Hosouchi T."/>
            <person name="Tsuruoka H."/>
            <person name="Kotani H."/>
        </authorList>
    </citation>
    <scope>NUCLEOTIDE SEQUENCE [LARGE SCALE GENOMIC DNA]</scope>
</reference>
<sequence length="117" mass="14162">MTRIKRGYIARRRRTKLRLFASSFRGAHSRLTRTMTQQRIRALVSAHRDRGKRKRDFRRLWITRINAVIHEMGVFYSYNQFIHNLYKKQLLLNRKILAQIALLNRSCLYTISNDIKK</sequence>
<proteinExistence type="inferred from homology"/>
<protein>
    <recommendedName>
        <fullName evidence="1">Large ribosomal subunit protein bL20c</fullName>
    </recommendedName>
    <alternativeName>
        <fullName evidence="2">50S ribosomal protein L20, chloroplastic</fullName>
    </alternativeName>
</protein>
<organism>
    <name type="scientific">Crucihimalaya wallichii</name>
    <name type="common">Rock-cress</name>
    <name type="synonym">Arabidopsis campestris</name>
    <dbReference type="NCBI Taxonomy" id="78192"/>
    <lineage>
        <taxon>Eukaryota</taxon>
        <taxon>Viridiplantae</taxon>
        <taxon>Streptophyta</taxon>
        <taxon>Embryophyta</taxon>
        <taxon>Tracheophyta</taxon>
        <taxon>Spermatophyta</taxon>
        <taxon>Magnoliopsida</taxon>
        <taxon>eudicotyledons</taxon>
        <taxon>Gunneridae</taxon>
        <taxon>Pentapetalae</taxon>
        <taxon>rosids</taxon>
        <taxon>malvids</taxon>
        <taxon>Brassicales</taxon>
        <taxon>Brassicaceae</taxon>
        <taxon>Crucihimalayeae</taxon>
        <taxon>Crucihimalaya</taxon>
    </lineage>
</organism>